<gene>
    <name evidence="5" type="primary">mra1</name>
    <name evidence="7" type="ORF">SPAC18G6.07c</name>
</gene>
<name>NEP1_SCHPO</name>
<sequence length="359" mass="39775">MPTYSKRKSRGSLEVSEKTNQPKFIKRSQSSETITSGETASELMQDEKEQSNGAVGSIEDEELQRLRENQASVEALSKKPESIDRELGVEALEIDNVVKSDEEKEDPNGASSKTVKARPLPAGSVHRVTTHMAPIPARSIGSHDTTTQRLIVVLDQACLEIYKVGKAKDAKYQLLNCDDHQGILKKLNRNIAQARPDITHQCLLTLLDSPLNKAGRLQVYIHTAKKVLIEVNPSVRIPRTFKRFSGLMVQLLHKLSIRSVNGNEKLLKVIKNPVTDYLPPNCRKATLSFDAPTVPPRKYLETLQPNQSVCIAIGAMAHGPDDFSDGWVDEKISISDYPLSASIACSKFLHSMEDFLGIV</sequence>
<dbReference type="EC" id="2.1.1.-" evidence="1"/>
<dbReference type="EMBL" id="D78582">
    <property type="protein sequence ID" value="BAA24497.1"/>
    <property type="molecule type" value="Genomic_DNA"/>
</dbReference>
<dbReference type="EMBL" id="CU329670">
    <property type="protein sequence ID" value="CAA92394.1"/>
    <property type="molecule type" value="Genomic_DNA"/>
</dbReference>
<dbReference type="PIR" id="T37921">
    <property type="entry name" value="T37921"/>
</dbReference>
<dbReference type="RefSeq" id="NP_593671.1">
    <property type="nucleotide sequence ID" value="NM_001019103.2"/>
</dbReference>
<dbReference type="SMR" id="Q10107"/>
<dbReference type="BioGRID" id="278615">
    <property type="interactions" value="8"/>
</dbReference>
<dbReference type="FunCoup" id="Q10107">
    <property type="interactions" value="609"/>
</dbReference>
<dbReference type="STRING" id="284812.Q10107"/>
<dbReference type="iPTMnet" id="Q10107"/>
<dbReference type="PaxDb" id="4896-SPAC18G6.07c.1"/>
<dbReference type="EnsemblFungi" id="SPAC18G6.07c.1">
    <property type="protein sequence ID" value="SPAC18G6.07c.1:pep"/>
    <property type="gene ID" value="SPAC18G6.07c"/>
</dbReference>
<dbReference type="GeneID" id="2542139"/>
<dbReference type="KEGG" id="spo:2542139"/>
<dbReference type="PomBase" id="SPAC18G6.07c">
    <property type="gene designation" value="mra1"/>
</dbReference>
<dbReference type="VEuPathDB" id="FungiDB:SPAC18G6.07c"/>
<dbReference type="eggNOG" id="KOG3073">
    <property type="taxonomic scope" value="Eukaryota"/>
</dbReference>
<dbReference type="HOGENOM" id="CLU_055846_0_0_1"/>
<dbReference type="InParanoid" id="Q10107"/>
<dbReference type="OMA" id="PNCRKAT"/>
<dbReference type="PhylomeDB" id="Q10107"/>
<dbReference type="Reactome" id="R-SPO-6791226">
    <property type="pathway name" value="Major pathway of rRNA processing in the nucleolus and cytosol"/>
</dbReference>
<dbReference type="PRO" id="PR:Q10107"/>
<dbReference type="Proteomes" id="UP000002485">
    <property type="component" value="Chromosome I"/>
</dbReference>
<dbReference type="GO" id="GO:0005829">
    <property type="term" value="C:cytosol"/>
    <property type="evidence" value="ECO:0007005"/>
    <property type="project" value="PomBase"/>
</dbReference>
<dbReference type="GO" id="GO:0005730">
    <property type="term" value="C:nucleolus"/>
    <property type="evidence" value="ECO:0007669"/>
    <property type="project" value="UniProtKB-SubCell"/>
</dbReference>
<dbReference type="GO" id="GO:0005634">
    <property type="term" value="C:nucleus"/>
    <property type="evidence" value="ECO:0007005"/>
    <property type="project" value="PomBase"/>
</dbReference>
<dbReference type="GO" id="GO:0032040">
    <property type="term" value="C:small-subunit processome"/>
    <property type="evidence" value="ECO:0000318"/>
    <property type="project" value="GO_Central"/>
</dbReference>
<dbReference type="GO" id="GO:0070037">
    <property type="term" value="F:rRNA (pseudouridine) methyltransferase activity"/>
    <property type="evidence" value="ECO:0000250"/>
    <property type="project" value="UniProtKB"/>
</dbReference>
<dbReference type="GO" id="GO:0019843">
    <property type="term" value="F:rRNA binding"/>
    <property type="evidence" value="ECO:0000318"/>
    <property type="project" value="GO_Central"/>
</dbReference>
<dbReference type="GO" id="GO:0019236">
    <property type="term" value="P:response to pheromone"/>
    <property type="evidence" value="ECO:0007669"/>
    <property type="project" value="UniProtKB-KW"/>
</dbReference>
<dbReference type="GO" id="GO:0070475">
    <property type="term" value="P:rRNA base methylation"/>
    <property type="evidence" value="ECO:0000318"/>
    <property type="project" value="GO_Central"/>
</dbReference>
<dbReference type="CDD" id="cd18088">
    <property type="entry name" value="Nep1-like"/>
    <property type="match status" value="1"/>
</dbReference>
<dbReference type="FunFam" id="3.40.1280.10:FF:000003">
    <property type="entry name" value="Ribosomal RNA small subunit methyltransferase"/>
    <property type="match status" value="1"/>
</dbReference>
<dbReference type="Gene3D" id="3.40.1280.10">
    <property type="match status" value="1"/>
</dbReference>
<dbReference type="InterPro" id="IPR029028">
    <property type="entry name" value="Alpha/beta_knot_MTases"/>
</dbReference>
<dbReference type="InterPro" id="IPR005304">
    <property type="entry name" value="Rbsml_bgen_MeTrfase_EMG1/NEP1"/>
</dbReference>
<dbReference type="InterPro" id="IPR029026">
    <property type="entry name" value="tRNA_m1G_MTases_N"/>
</dbReference>
<dbReference type="PANTHER" id="PTHR12636">
    <property type="entry name" value="NEP1/MRA1"/>
    <property type="match status" value="1"/>
</dbReference>
<dbReference type="PANTHER" id="PTHR12636:SF5">
    <property type="entry name" value="RIBOSOMAL RNA SMALL SUBUNIT METHYLTRANSFERASE NEP1"/>
    <property type="match status" value="1"/>
</dbReference>
<dbReference type="Pfam" id="PF03587">
    <property type="entry name" value="EMG1"/>
    <property type="match status" value="1"/>
</dbReference>
<dbReference type="SUPFAM" id="SSF75217">
    <property type="entry name" value="alpha/beta knot"/>
    <property type="match status" value="1"/>
</dbReference>
<feature type="chain" id="PRO_0000158613" description="Ribosomal RNA small subunit methyltransferase mra1">
    <location>
        <begin position="1"/>
        <end position="359"/>
    </location>
</feature>
<feature type="region of interest" description="Disordered" evidence="2">
    <location>
        <begin position="1"/>
        <end position="62"/>
    </location>
</feature>
<feature type="region of interest" description="Disordered" evidence="2">
    <location>
        <begin position="98"/>
        <end position="118"/>
    </location>
</feature>
<feature type="compositionally biased region" description="Basic residues" evidence="2">
    <location>
        <begin position="1"/>
        <end position="10"/>
    </location>
</feature>
<feature type="compositionally biased region" description="Polar residues" evidence="2">
    <location>
        <begin position="18"/>
        <end position="39"/>
    </location>
</feature>
<feature type="binding site" evidence="1">
    <location>
        <position position="287"/>
    </location>
    <ligand>
        <name>S-adenosyl-L-methionine</name>
        <dbReference type="ChEBI" id="CHEBI:59789"/>
    </ligand>
</feature>
<feature type="binding site" evidence="1">
    <location>
        <position position="314"/>
    </location>
    <ligand>
        <name>S-adenosyl-L-methionine</name>
        <dbReference type="ChEBI" id="CHEBI:59789"/>
    </ligand>
</feature>
<feature type="binding site" evidence="1">
    <location>
        <begin position="319"/>
        <end position="321"/>
    </location>
    <ligand>
        <name>S-adenosyl-L-methionine</name>
        <dbReference type="ChEBI" id="CHEBI:59789"/>
    </ligand>
</feature>
<feature type="binding site" evidence="1">
    <location>
        <begin position="334"/>
        <end position="339"/>
    </location>
    <ligand>
        <name>S-adenosyl-L-methionine</name>
        <dbReference type="ChEBI" id="CHEBI:59789"/>
    </ligand>
</feature>
<feature type="site" description="Interaction with substrate rRNA" evidence="1">
    <location>
        <position position="195"/>
    </location>
</feature>
<feature type="site" description="Stabilizes Arg-195" evidence="1">
    <location>
        <position position="197"/>
    </location>
</feature>
<feature type="site" description="Interaction with substrate rRNA" evidence="1">
    <location>
        <position position="236"/>
    </location>
</feature>
<feature type="site" description="Interaction with substrate rRNA" evidence="1">
    <location>
        <position position="239"/>
    </location>
</feature>
<feature type="site" description="Interaction with substrate rRNA" evidence="1">
    <location>
        <position position="243"/>
    </location>
</feature>
<feature type="modified residue" description="Phosphoserine" evidence="3">
    <location>
        <position position="12"/>
    </location>
</feature>
<feature type="modified residue" description="Phosphothreonine" evidence="3">
    <location>
        <position position="33"/>
    </location>
</feature>
<feature type="modified residue" description="Phosphoserine" evidence="3">
    <location>
        <position position="100"/>
    </location>
</feature>
<protein>
    <recommendedName>
        <fullName evidence="6">Ribosomal RNA small subunit methyltransferase mra1</fullName>
        <ecNumber evidence="1">2.1.1.-</ecNumber>
    </recommendedName>
    <alternativeName>
        <fullName evidence="1">18S rRNA (pseudouridine-N1)-methyltransferase</fullName>
    </alternativeName>
    <alternativeName>
        <fullName evidence="5">Multicopy suppressor of ras1-deficiency protein</fullName>
    </alternativeName>
</protein>
<proteinExistence type="evidence at protein level"/>
<accession>Q10107</accession>
<evidence type="ECO:0000250" key="1">
    <source>
        <dbReference type="UniProtKB" id="Q06287"/>
    </source>
</evidence>
<evidence type="ECO:0000256" key="2">
    <source>
        <dbReference type="SAM" id="MobiDB-lite"/>
    </source>
</evidence>
<evidence type="ECO:0000269" key="3">
    <source>
    </source>
</evidence>
<evidence type="ECO:0000269" key="4">
    <source>
    </source>
</evidence>
<evidence type="ECO:0000303" key="5">
    <source>
    </source>
</evidence>
<evidence type="ECO:0000305" key="6"/>
<evidence type="ECO:0000312" key="7">
    <source>
        <dbReference type="PomBase" id="SPAC18G6.07c"/>
    </source>
</evidence>
<comment type="function">
    <text evidence="1 4">S-adenosyl-L-methionine-dependent pseudouridine N(1)-methyltransferase that methylates the pseudouridine corresponding to position 1189 (Psi1189) in S.cerevisiae 18S rRNA. Involved the biosynthesis of the hypermodified N1-methyl-N3-(3-amino-3-carboxypropyl) pseudouridine (m1acp3-Psi) conserved in eukaryotic 18S rRNA. Also has an essential role in 40S ribosomal subunit biogenesis independent on its methyltransferase activity, facilitating the incorporation of ribosomal protein S19 during the formation of pre-ribosomes (By similarity). Essential for cell growth. It also has a key role in promoting the mating function (PubMed:9133664).</text>
</comment>
<comment type="catalytic activity">
    <reaction evidence="1">
        <text>a pseudouridine in rRNA + S-adenosyl-L-methionine = an N(1)-methylpseudouridine in rRNA + S-adenosyl-L-homocysteine + H(+)</text>
        <dbReference type="Rhea" id="RHEA:46696"/>
        <dbReference type="Rhea" id="RHEA-COMP:11634"/>
        <dbReference type="Rhea" id="RHEA-COMP:13933"/>
        <dbReference type="ChEBI" id="CHEBI:15378"/>
        <dbReference type="ChEBI" id="CHEBI:57856"/>
        <dbReference type="ChEBI" id="CHEBI:59789"/>
        <dbReference type="ChEBI" id="CHEBI:65314"/>
        <dbReference type="ChEBI" id="CHEBI:74890"/>
    </reaction>
</comment>
<comment type="subunit">
    <text evidence="1">Homodimer.</text>
</comment>
<comment type="subcellular location">
    <subcellularLocation>
        <location evidence="1">Nucleus</location>
        <location evidence="1">Nucleolus</location>
    </subcellularLocation>
</comment>
<comment type="similarity">
    <text evidence="6">Belongs to the class IV-like SAM-binding methyltransferase superfamily. RNA methyltransferase NEP1 family.</text>
</comment>
<reference key="1">
    <citation type="journal article" date="1996" name="Genes Cells">
        <title>The Schizosaccharomyces pombe mra1 gene, which is required for cell growth and mating, can suppress the mating inefficiency caused by a deficit in the Ras1 activity.</title>
        <authorList>
            <person name="Hakuno F."/>
            <person name="Hughes D.A."/>
            <person name="Yamamoto M."/>
        </authorList>
    </citation>
    <scope>NUCLEOTIDE SEQUENCE [GENOMIC DNA]</scope>
    <scope>FUNCTION</scope>
    <source>
        <strain>JY450</strain>
    </source>
</reference>
<reference key="2">
    <citation type="journal article" date="2002" name="Nature">
        <title>The genome sequence of Schizosaccharomyces pombe.</title>
        <authorList>
            <person name="Wood V."/>
            <person name="Gwilliam R."/>
            <person name="Rajandream M.A."/>
            <person name="Lyne M.H."/>
            <person name="Lyne R."/>
            <person name="Stewart A."/>
            <person name="Sgouros J.G."/>
            <person name="Peat N."/>
            <person name="Hayles J."/>
            <person name="Baker S.G."/>
            <person name="Basham D."/>
            <person name="Bowman S."/>
            <person name="Brooks K."/>
            <person name="Brown D."/>
            <person name="Brown S."/>
            <person name="Chillingworth T."/>
            <person name="Churcher C.M."/>
            <person name="Collins M."/>
            <person name="Connor R."/>
            <person name="Cronin A."/>
            <person name="Davis P."/>
            <person name="Feltwell T."/>
            <person name="Fraser A."/>
            <person name="Gentles S."/>
            <person name="Goble A."/>
            <person name="Hamlin N."/>
            <person name="Harris D.E."/>
            <person name="Hidalgo J."/>
            <person name="Hodgson G."/>
            <person name="Holroyd S."/>
            <person name="Hornsby T."/>
            <person name="Howarth S."/>
            <person name="Huckle E.J."/>
            <person name="Hunt S."/>
            <person name="Jagels K."/>
            <person name="James K.D."/>
            <person name="Jones L."/>
            <person name="Jones M."/>
            <person name="Leather S."/>
            <person name="McDonald S."/>
            <person name="McLean J."/>
            <person name="Mooney P."/>
            <person name="Moule S."/>
            <person name="Mungall K.L."/>
            <person name="Murphy L.D."/>
            <person name="Niblett D."/>
            <person name="Odell C."/>
            <person name="Oliver K."/>
            <person name="O'Neil S."/>
            <person name="Pearson D."/>
            <person name="Quail M.A."/>
            <person name="Rabbinowitsch E."/>
            <person name="Rutherford K.M."/>
            <person name="Rutter S."/>
            <person name="Saunders D."/>
            <person name="Seeger K."/>
            <person name="Sharp S."/>
            <person name="Skelton J."/>
            <person name="Simmonds M.N."/>
            <person name="Squares R."/>
            <person name="Squares S."/>
            <person name="Stevens K."/>
            <person name="Taylor K."/>
            <person name="Taylor R.G."/>
            <person name="Tivey A."/>
            <person name="Walsh S.V."/>
            <person name="Warren T."/>
            <person name="Whitehead S."/>
            <person name="Woodward J.R."/>
            <person name="Volckaert G."/>
            <person name="Aert R."/>
            <person name="Robben J."/>
            <person name="Grymonprez B."/>
            <person name="Weltjens I."/>
            <person name="Vanstreels E."/>
            <person name="Rieger M."/>
            <person name="Schaefer M."/>
            <person name="Mueller-Auer S."/>
            <person name="Gabel C."/>
            <person name="Fuchs M."/>
            <person name="Duesterhoeft A."/>
            <person name="Fritzc C."/>
            <person name="Holzer E."/>
            <person name="Moestl D."/>
            <person name="Hilbert H."/>
            <person name="Borzym K."/>
            <person name="Langer I."/>
            <person name="Beck A."/>
            <person name="Lehrach H."/>
            <person name="Reinhardt R."/>
            <person name="Pohl T.M."/>
            <person name="Eger P."/>
            <person name="Zimmermann W."/>
            <person name="Wedler H."/>
            <person name="Wambutt R."/>
            <person name="Purnelle B."/>
            <person name="Goffeau A."/>
            <person name="Cadieu E."/>
            <person name="Dreano S."/>
            <person name="Gloux S."/>
            <person name="Lelaure V."/>
            <person name="Mottier S."/>
            <person name="Galibert F."/>
            <person name="Aves S.J."/>
            <person name="Xiang Z."/>
            <person name="Hunt C."/>
            <person name="Moore K."/>
            <person name="Hurst S.M."/>
            <person name="Lucas M."/>
            <person name="Rochet M."/>
            <person name="Gaillardin C."/>
            <person name="Tallada V.A."/>
            <person name="Garzon A."/>
            <person name="Thode G."/>
            <person name="Daga R.R."/>
            <person name="Cruzado L."/>
            <person name="Jimenez J."/>
            <person name="Sanchez M."/>
            <person name="del Rey F."/>
            <person name="Benito J."/>
            <person name="Dominguez A."/>
            <person name="Revuelta J.L."/>
            <person name="Moreno S."/>
            <person name="Armstrong J."/>
            <person name="Forsburg S.L."/>
            <person name="Cerutti L."/>
            <person name="Lowe T."/>
            <person name="McCombie W.R."/>
            <person name="Paulsen I."/>
            <person name="Potashkin J."/>
            <person name="Shpakovski G.V."/>
            <person name="Ussery D."/>
            <person name="Barrell B.G."/>
            <person name="Nurse P."/>
        </authorList>
    </citation>
    <scope>NUCLEOTIDE SEQUENCE [LARGE SCALE GENOMIC DNA]</scope>
    <source>
        <strain>972 / ATCC 24843</strain>
    </source>
</reference>
<reference key="3">
    <citation type="journal article" date="2008" name="J. Proteome Res.">
        <title>Phosphoproteome analysis of fission yeast.</title>
        <authorList>
            <person name="Wilson-Grady J.T."/>
            <person name="Villen J."/>
            <person name="Gygi S.P."/>
        </authorList>
    </citation>
    <scope>PHOSPHORYLATION [LARGE SCALE ANALYSIS] AT SER-12; THR-33 AND SER-100</scope>
    <scope>IDENTIFICATION BY MASS SPECTROMETRY</scope>
</reference>
<keyword id="KW-0489">Methyltransferase</keyword>
<keyword id="KW-0539">Nucleus</keyword>
<keyword id="KW-0589">Pheromone response</keyword>
<keyword id="KW-0597">Phosphoprotein</keyword>
<keyword id="KW-1185">Reference proteome</keyword>
<keyword id="KW-0690">Ribosome biogenesis</keyword>
<keyword id="KW-0694">RNA-binding</keyword>
<keyword id="KW-0698">rRNA processing</keyword>
<keyword id="KW-0699">rRNA-binding</keyword>
<keyword id="KW-0949">S-adenosyl-L-methionine</keyword>
<keyword id="KW-0808">Transferase</keyword>
<organism>
    <name type="scientific">Schizosaccharomyces pombe (strain 972 / ATCC 24843)</name>
    <name type="common">Fission yeast</name>
    <dbReference type="NCBI Taxonomy" id="284812"/>
    <lineage>
        <taxon>Eukaryota</taxon>
        <taxon>Fungi</taxon>
        <taxon>Dikarya</taxon>
        <taxon>Ascomycota</taxon>
        <taxon>Taphrinomycotina</taxon>
        <taxon>Schizosaccharomycetes</taxon>
        <taxon>Schizosaccharomycetales</taxon>
        <taxon>Schizosaccharomycetaceae</taxon>
        <taxon>Schizosaccharomyces</taxon>
    </lineage>
</organism>